<reference key="1">
    <citation type="journal article" date="2007" name="PLoS Genet.">
        <title>Patterns and implications of gene gain and loss in the evolution of Prochlorococcus.</title>
        <authorList>
            <person name="Kettler G.C."/>
            <person name="Martiny A.C."/>
            <person name="Huang K."/>
            <person name="Zucker J."/>
            <person name="Coleman M.L."/>
            <person name="Rodrigue S."/>
            <person name="Chen F."/>
            <person name="Lapidus A."/>
            <person name="Ferriera S."/>
            <person name="Johnson J."/>
            <person name="Steglich C."/>
            <person name="Church G.M."/>
            <person name="Richardson P."/>
            <person name="Chisholm S.W."/>
        </authorList>
    </citation>
    <scope>NUCLEOTIDE SEQUENCE [LARGE SCALE GENOMIC DNA]</scope>
    <source>
        <strain>MIT 9301</strain>
    </source>
</reference>
<proteinExistence type="inferred from homology"/>
<organism>
    <name type="scientific">Prochlorococcus marinus (strain MIT 9301)</name>
    <dbReference type="NCBI Taxonomy" id="167546"/>
    <lineage>
        <taxon>Bacteria</taxon>
        <taxon>Bacillati</taxon>
        <taxon>Cyanobacteriota</taxon>
        <taxon>Cyanophyceae</taxon>
        <taxon>Synechococcales</taxon>
        <taxon>Prochlorococcaceae</taxon>
        <taxon>Prochlorococcus</taxon>
    </lineage>
</organism>
<comment type="function">
    <text evidence="1">Catalyzes the ATP-dependent conversion of 7-carboxy-7-deazaguanine (CDG) to 7-cyano-7-deazaguanine (preQ(0)).</text>
</comment>
<comment type="catalytic activity">
    <reaction evidence="1">
        <text>7-carboxy-7-deazaguanine + NH4(+) + ATP = 7-cyano-7-deazaguanine + ADP + phosphate + H2O + H(+)</text>
        <dbReference type="Rhea" id="RHEA:27982"/>
        <dbReference type="ChEBI" id="CHEBI:15377"/>
        <dbReference type="ChEBI" id="CHEBI:15378"/>
        <dbReference type="ChEBI" id="CHEBI:28938"/>
        <dbReference type="ChEBI" id="CHEBI:30616"/>
        <dbReference type="ChEBI" id="CHEBI:43474"/>
        <dbReference type="ChEBI" id="CHEBI:45075"/>
        <dbReference type="ChEBI" id="CHEBI:61036"/>
        <dbReference type="ChEBI" id="CHEBI:456216"/>
        <dbReference type="EC" id="6.3.4.20"/>
    </reaction>
</comment>
<comment type="cofactor">
    <cofactor evidence="1">
        <name>Zn(2+)</name>
        <dbReference type="ChEBI" id="CHEBI:29105"/>
    </cofactor>
    <text evidence="1">Binds 1 zinc ion per subunit.</text>
</comment>
<comment type="pathway">
    <text evidence="1">Purine metabolism; 7-cyano-7-deazaguanine biosynthesis.</text>
</comment>
<comment type="similarity">
    <text evidence="1">Belongs to the QueC family.</text>
</comment>
<dbReference type="EC" id="6.3.4.20" evidence="1"/>
<dbReference type="EMBL" id="CP000576">
    <property type="protein sequence ID" value="ABO18505.1"/>
    <property type="molecule type" value="Genomic_DNA"/>
</dbReference>
<dbReference type="RefSeq" id="WP_011863787.1">
    <property type="nucleotide sequence ID" value="NC_009091.1"/>
</dbReference>
<dbReference type="SMR" id="A3PFI0"/>
<dbReference type="STRING" id="167546.P9301_18821"/>
<dbReference type="KEGG" id="pmg:P9301_18821"/>
<dbReference type="eggNOG" id="COG0603">
    <property type="taxonomic scope" value="Bacteria"/>
</dbReference>
<dbReference type="HOGENOM" id="CLU_081854_1_0_3"/>
<dbReference type="OrthoDB" id="9789567at2"/>
<dbReference type="UniPathway" id="UPA00391"/>
<dbReference type="Proteomes" id="UP000001430">
    <property type="component" value="Chromosome"/>
</dbReference>
<dbReference type="GO" id="GO:0005524">
    <property type="term" value="F:ATP binding"/>
    <property type="evidence" value="ECO:0007669"/>
    <property type="project" value="UniProtKB-UniRule"/>
</dbReference>
<dbReference type="GO" id="GO:0016879">
    <property type="term" value="F:ligase activity, forming carbon-nitrogen bonds"/>
    <property type="evidence" value="ECO:0007669"/>
    <property type="project" value="UniProtKB-UniRule"/>
</dbReference>
<dbReference type="GO" id="GO:0008270">
    <property type="term" value="F:zinc ion binding"/>
    <property type="evidence" value="ECO:0007669"/>
    <property type="project" value="UniProtKB-UniRule"/>
</dbReference>
<dbReference type="GO" id="GO:0008616">
    <property type="term" value="P:queuosine biosynthetic process"/>
    <property type="evidence" value="ECO:0007669"/>
    <property type="project" value="UniProtKB-UniRule"/>
</dbReference>
<dbReference type="CDD" id="cd01995">
    <property type="entry name" value="QueC-like"/>
    <property type="match status" value="1"/>
</dbReference>
<dbReference type="Gene3D" id="3.40.50.620">
    <property type="entry name" value="HUPs"/>
    <property type="match status" value="1"/>
</dbReference>
<dbReference type="HAMAP" id="MF_01633">
    <property type="entry name" value="QueC"/>
    <property type="match status" value="1"/>
</dbReference>
<dbReference type="InterPro" id="IPR018317">
    <property type="entry name" value="QueC"/>
</dbReference>
<dbReference type="InterPro" id="IPR014729">
    <property type="entry name" value="Rossmann-like_a/b/a_fold"/>
</dbReference>
<dbReference type="NCBIfam" id="TIGR00364">
    <property type="entry name" value="7-cyano-7-deazaguanine synthase QueC"/>
    <property type="match status" value="1"/>
</dbReference>
<dbReference type="PANTHER" id="PTHR42914">
    <property type="entry name" value="7-CYANO-7-DEAZAGUANINE SYNTHASE"/>
    <property type="match status" value="1"/>
</dbReference>
<dbReference type="PANTHER" id="PTHR42914:SF1">
    <property type="entry name" value="7-CYANO-7-DEAZAGUANINE SYNTHASE"/>
    <property type="match status" value="1"/>
</dbReference>
<dbReference type="Pfam" id="PF06508">
    <property type="entry name" value="QueC"/>
    <property type="match status" value="1"/>
</dbReference>
<dbReference type="PIRSF" id="PIRSF006293">
    <property type="entry name" value="ExsB"/>
    <property type="match status" value="1"/>
</dbReference>
<dbReference type="SUPFAM" id="SSF52402">
    <property type="entry name" value="Adenine nucleotide alpha hydrolases-like"/>
    <property type="match status" value="1"/>
</dbReference>
<protein>
    <recommendedName>
        <fullName evidence="1">7-cyano-7-deazaguanine synthase</fullName>
        <ecNumber evidence="1">6.3.4.20</ecNumber>
    </recommendedName>
    <alternativeName>
        <fullName evidence="1">7-cyano-7-carbaguanine synthase</fullName>
    </alternativeName>
    <alternativeName>
        <fullName evidence="1">PreQ(0) synthase</fullName>
    </alternativeName>
    <alternativeName>
        <fullName evidence="1">Queuosine biosynthesis protein QueC</fullName>
    </alternativeName>
</protein>
<feature type="chain" id="PRO_1000069786" description="7-cyano-7-deazaguanine synthase">
    <location>
        <begin position="1"/>
        <end position="224"/>
    </location>
</feature>
<feature type="binding site" evidence="1">
    <location>
        <begin position="12"/>
        <end position="22"/>
    </location>
    <ligand>
        <name>ATP</name>
        <dbReference type="ChEBI" id="CHEBI:30616"/>
    </ligand>
</feature>
<feature type="binding site" evidence="1">
    <location>
        <position position="193"/>
    </location>
    <ligand>
        <name>Zn(2+)</name>
        <dbReference type="ChEBI" id="CHEBI:29105"/>
    </ligand>
</feature>
<feature type="binding site" evidence="1">
    <location>
        <position position="201"/>
    </location>
    <ligand>
        <name>Zn(2+)</name>
        <dbReference type="ChEBI" id="CHEBI:29105"/>
    </ligand>
</feature>
<feature type="binding site" evidence="1">
    <location>
        <position position="204"/>
    </location>
    <ligand>
        <name>Zn(2+)</name>
        <dbReference type="ChEBI" id="CHEBI:29105"/>
    </ligand>
</feature>
<feature type="binding site" evidence="1">
    <location>
        <position position="207"/>
    </location>
    <ligand>
        <name>Zn(2+)</name>
        <dbReference type="ChEBI" id="CHEBI:29105"/>
    </ligand>
</feature>
<name>QUEC_PROM0</name>
<sequence length="224" mass="25053">MNLKNKSIVVLLSGGLDSSTVTGIAKKSEAKIFGLSFDYGQRHKKELNSASIIAKHFDIEEFKIIKLDLSLWGGSSLTDSQKNIPIEGVQANKIPNTYVPGRNTIFISVALSYAEAIDADFIGLGVNALDYSGYPDCRPDYIKKFQELADLANKRGRENNPIKLWTPLLDLNKEEIIKLAFDNHVPFDKTWSCYSGNSKPCGKCDSCRIRNAAYEKWLNNKNKK</sequence>
<evidence type="ECO:0000255" key="1">
    <source>
        <dbReference type="HAMAP-Rule" id="MF_01633"/>
    </source>
</evidence>
<accession>A3PFI0</accession>
<keyword id="KW-0067">ATP-binding</keyword>
<keyword id="KW-0436">Ligase</keyword>
<keyword id="KW-0479">Metal-binding</keyword>
<keyword id="KW-0547">Nucleotide-binding</keyword>
<keyword id="KW-0671">Queuosine biosynthesis</keyword>
<keyword id="KW-1185">Reference proteome</keyword>
<keyword id="KW-0862">Zinc</keyword>
<gene>
    <name evidence="1" type="primary">queC</name>
    <name type="ordered locus">P9301_18821</name>
</gene>